<gene>
    <name type="primary">CIPK3</name>
    <name type="synonym">PKS12</name>
    <name type="synonym">SnRK3.17</name>
    <name type="ordered locus">At2g26980</name>
    <name type="ORF">T20P8.3</name>
</gene>
<comment type="function">
    <text evidence="6 7">Involved in the resistance to some abiotic stresses (e.g. high salt, hyperosmotic stress) in young seedlings, by regulating the expression of several stress-inducible genes (cold- and salt-induced genes but not drought-responsive genes). Required for the ABA response during germination. CIPK serine-threonine protein kinases interact with CBL proteins. Binding of a CBL protein to the regulatory NAF domain of CIPK protein lead to the activation of the kinase in a calcium-dependent manner. The CBL9/CIPK3 complex acts in the regulation of abscisic acid response in seed germination.</text>
</comment>
<comment type="catalytic activity">
    <reaction>
        <text>L-seryl-[protein] + ATP = O-phospho-L-seryl-[protein] + ADP + H(+)</text>
        <dbReference type="Rhea" id="RHEA:17989"/>
        <dbReference type="Rhea" id="RHEA-COMP:9863"/>
        <dbReference type="Rhea" id="RHEA-COMP:11604"/>
        <dbReference type="ChEBI" id="CHEBI:15378"/>
        <dbReference type="ChEBI" id="CHEBI:29999"/>
        <dbReference type="ChEBI" id="CHEBI:30616"/>
        <dbReference type="ChEBI" id="CHEBI:83421"/>
        <dbReference type="ChEBI" id="CHEBI:456216"/>
        <dbReference type="EC" id="2.7.11.1"/>
    </reaction>
</comment>
<comment type="catalytic activity">
    <reaction>
        <text>L-threonyl-[protein] + ATP = O-phospho-L-threonyl-[protein] + ADP + H(+)</text>
        <dbReference type="Rhea" id="RHEA:46608"/>
        <dbReference type="Rhea" id="RHEA-COMP:11060"/>
        <dbReference type="Rhea" id="RHEA-COMP:11605"/>
        <dbReference type="ChEBI" id="CHEBI:15378"/>
        <dbReference type="ChEBI" id="CHEBI:30013"/>
        <dbReference type="ChEBI" id="CHEBI:30616"/>
        <dbReference type="ChEBI" id="CHEBI:61977"/>
        <dbReference type="ChEBI" id="CHEBI:456216"/>
        <dbReference type="EC" id="2.7.11.1"/>
    </reaction>
</comment>
<comment type="cofactor">
    <cofactor evidence="1">
        <name>Mn(2+)</name>
        <dbReference type="ChEBI" id="CHEBI:29035"/>
    </cofactor>
</comment>
<comment type="subunit">
    <text evidence="5 7">Interacts with CBL3 and CBL9.</text>
</comment>
<comment type="interaction">
    <interactant intactId="EBI-1748724">
        <id>Q2V452</id>
    </interactant>
    <interactant intactId="EBI-637381">
        <id>Q9LTB8</id>
        <label>CBL9</label>
    </interactant>
    <organismsDiffer>false</organismsDiffer>
    <experiments>5</experiments>
</comment>
<comment type="interaction">
    <interactant intactId="EBI-1748724">
        <id>Q2V452</id>
    </interactant>
    <interactant intactId="EBI-15202166">
        <id>Q94AW5</id>
        <label>ERF003</label>
    </interactant>
    <organismsDiffer>false</organismsDiffer>
    <experiments>3</experiments>
</comment>
<comment type="interaction">
    <interactant intactId="EBI-1748724">
        <id>Q2V452</id>
    </interactant>
    <interactant intactId="EBI-1645478">
        <id>Q38845</id>
        <label>PP2AA1</label>
    </interactant>
    <organismsDiffer>false</organismsDiffer>
    <experiments>3</experiments>
</comment>
<comment type="interaction">
    <interactant intactId="EBI-1748724">
        <id>Q2V452</id>
    </interactant>
    <interactant intactId="EBI-15192297">
        <id>Q9LQF0</id>
        <label>TCP23</label>
    </interactant>
    <organismsDiffer>false</organismsDiffer>
    <experiments>3</experiments>
</comment>
<comment type="alternative products">
    <event type="alternative splicing"/>
    <isoform>
        <id>Q2V452-2</id>
        <name>2</name>
        <sequence type="displayed"/>
    </isoform>
    <isoform>
        <id>Q2V452-1</id>
        <name>1</name>
        <sequence type="described" ref="VSP_038051"/>
    </isoform>
    <isoform>
        <id>Q2V452-3</id>
        <name>3</name>
        <sequence type="described" ref="VSP_033979 VSP_038050"/>
    </isoform>
    <isoform>
        <id>Q2V452-4</id>
        <name>4</name>
        <sequence type="described" ref="VSP_033981"/>
    </isoform>
    <isoform>
        <id>Q2V452-5</id>
        <name>5</name>
        <sequence type="described" ref="VSP_033980 VSP_038049"/>
    </isoform>
</comment>
<comment type="tissue specificity">
    <text evidence="6">Mostly expressed in germinating seeds and young seedlings. Detected at low levels in roots, stems, leaves and flowers.</text>
</comment>
<comment type="induction">
    <text evidence="6">By stresses such as cold, drought, high salt, wounding, and abscisic acid (ABA).</text>
</comment>
<comment type="domain">
    <text evidence="1">The activation loop within the kinase domain is the target of phosphorylation/activation by upstream protein kinases. The PPI motif mediates the interaction with the ABI (abscisic acid-insensitive) phosphatases (By similarity).</text>
</comment>
<comment type="miscellaneous">
    <molecule>Isoform 3</molecule>
    <text evidence="11">May be due to an intron retention.</text>
</comment>
<comment type="miscellaneous">
    <molecule>Isoform 4</molecule>
    <text evidence="11">May be due to an intron retention.</text>
</comment>
<comment type="miscellaneous">
    <molecule>Isoform 5</molecule>
    <text evidence="11">May be due to a competing acceptor splice site.</text>
</comment>
<comment type="similarity">
    <text evidence="11">Belongs to the protein kinase superfamily. CAMK Ser/Thr protein kinase family. SNF1 subfamily.</text>
</comment>
<sequence>MNRRQQVKRRVGKYEVGRTIGEGTFAKVKFARNSETGEPVALKILDKEKVLKHKMAEQIRREIATMKLIKHPNVVQLYEVMASKTKIFIILEYVTGGELFDKIVNDGRMKEDEARRYFQQLIHAVDYCHSRGVYHRDLKPENLLLDSYGNLKISDFGLSALSQQVRDDGLLHTSCGTPNYVAPEVLNDRGYDGATADMWSCGVVLYVLLAGYLPFDDSNLMNLYKKISSGEFNCPPWLSLGAMKLITRILDPNPMTRVTPQEVFEDEWFKKDYKPPVFEERDDSNMDDIDAVFKDSEEHLVTEKREEQPAAINAFEIISMSRGLNLENLFDPEQEFKRETRITLRGGANEIIEKIEEAAKPLGFDVQKKNYKMRLENVKAGRKGNLNVATEIFQVAPSLHMVQVSKSKGDTLEFHKFYKKLSNSLEQVVWTNNEVKKETAK</sequence>
<protein>
    <recommendedName>
        <fullName>CBL-interacting serine/threonine-protein kinase 3</fullName>
        <ecNumber>2.7.11.1</ecNumber>
    </recommendedName>
    <alternativeName>
        <fullName>SNF1-related kinase 3.17</fullName>
    </alternativeName>
    <alternativeName>
        <fullName>SOS2-like protein kinase PKS12</fullName>
    </alternativeName>
</protein>
<keyword id="KW-0025">Alternative splicing</keyword>
<keyword id="KW-0067">ATP-binding</keyword>
<keyword id="KW-0418">Kinase</keyword>
<keyword id="KW-0464">Manganese</keyword>
<keyword id="KW-0547">Nucleotide-binding</keyword>
<keyword id="KW-1185">Reference proteome</keyword>
<keyword id="KW-0723">Serine/threonine-protein kinase</keyword>
<keyword id="KW-0808">Transferase</keyword>
<dbReference type="EC" id="2.7.11.1"/>
<dbReference type="EMBL" id="AF286051">
    <property type="protein sequence ID" value="AAF86507.1"/>
    <property type="molecule type" value="mRNA"/>
</dbReference>
<dbReference type="EMBL" id="AY266298">
    <property type="protein sequence ID" value="AAP22036.1"/>
    <property type="molecule type" value="mRNA"/>
</dbReference>
<dbReference type="EMBL" id="AC005623">
    <property type="protein sequence ID" value="AAC77856.2"/>
    <property type="molecule type" value="Genomic_DNA"/>
</dbReference>
<dbReference type="EMBL" id="AC005623">
    <property type="protein sequence ID" value="AAM15068.1"/>
    <property type="molecule type" value="Genomic_DNA"/>
</dbReference>
<dbReference type="EMBL" id="CP002685">
    <property type="protein sequence ID" value="AEC07915.1"/>
    <property type="molecule type" value="Genomic_DNA"/>
</dbReference>
<dbReference type="EMBL" id="CP002685">
    <property type="protein sequence ID" value="AEC07916.1"/>
    <property type="molecule type" value="Genomic_DNA"/>
</dbReference>
<dbReference type="EMBL" id="AF367290">
    <property type="protein sequence ID" value="AAK56278.1"/>
    <property type="molecule type" value="mRNA"/>
</dbReference>
<dbReference type="EMBL" id="AY059163">
    <property type="protein sequence ID" value="AAL15388.1"/>
    <property type="molecule type" value="mRNA"/>
</dbReference>
<dbReference type="EMBL" id="AY091098">
    <property type="protein sequence ID" value="AAM14049.1"/>
    <property type="molecule type" value="mRNA"/>
</dbReference>
<dbReference type="EMBL" id="AY142671">
    <property type="protein sequence ID" value="AAN13209.1"/>
    <property type="molecule type" value="mRNA"/>
</dbReference>
<dbReference type="EMBL" id="AK229978">
    <property type="protein sequence ID" value="BAF01803.1"/>
    <property type="molecule type" value="mRNA"/>
</dbReference>
<dbReference type="PIR" id="C84667">
    <property type="entry name" value="C84667"/>
</dbReference>
<dbReference type="RefSeq" id="NP_850092.1">
    <molecule id="Q2V452-3"/>
    <property type="nucleotide sequence ID" value="NM_179761.2"/>
</dbReference>
<dbReference type="RefSeq" id="NP_850094.1">
    <molecule id="Q2V452-2"/>
    <property type="nucleotide sequence ID" value="NM_179763.4"/>
</dbReference>
<dbReference type="SMR" id="Q2V452"/>
<dbReference type="BioGRID" id="2592">
    <property type="interactions" value="13"/>
</dbReference>
<dbReference type="FunCoup" id="Q2V452">
    <property type="interactions" value="1506"/>
</dbReference>
<dbReference type="IntAct" id="Q2V452">
    <property type="interactions" value="6"/>
</dbReference>
<dbReference type="STRING" id="3702.Q2V452"/>
<dbReference type="iPTMnet" id="Q2V452"/>
<dbReference type="PaxDb" id="3702-AT2G26980.4"/>
<dbReference type="ProteomicsDB" id="246790">
    <molecule id="Q2V452-2"/>
</dbReference>
<dbReference type="EnsemblPlants" id="AT2G26980.1">
    <molecule id="Q2V452-3"/>
    <property type="protein sequence ID" value="AT2G26980.1"/>
    <property type="gene ID" value="AT2G26980"/>
</dbReference>
<dbReference type="EnsemblPlants" id="AT2G26980.3">
    <molecule id="Q2V452-2"/>
    <property type="protein sequence ID" value="AT2G26980.3"/>
    <property type="gene ID" value="AT2G26980"/>
</dbReference>
<dbReference type="GeneID" id="817240"/>
<dbReference type="Gramene" id="AT2G26980.1">
    <molecule id="Q2V452-3"/>
    <property type="protein sequence ID" value="AT2G26980.1"/>
    <property type="gene ID" value="AT2G26980"/>
</dbReference>
<dbReference type="Gramene" id="AT2G26980.3">
    <molecule id="Q2V452-2"/>
    <property type="protein sequence ID" value="AT2G26980.3"/>
    <property type="gene ID" value="AT2G26980"/>
</dbReference>
<dbReference type="KEGG" id="ath:AT2G26980"/>
<dbReference type="Araport" id="AT2G26980"/>
<dbReference type="TAIR" id="AT2G26980">
    <property type="gene designation" value="CIPK3"/>
</dbReference>
<dbReference type="eggNOG" id="KOG0583">
    <property type="taxonomic scope" value="Eukaryota"/>
</dbReference>
<dbReference type="InParanoid" id="Q2V452"/>
<dbReference type="OMA" id="NEKGDAN"/>
<dbReference type="PhylomeDB" id="Q2V452"/>
<dbReference type="PRO" id="PR:Q2V452"/>
<dbReference type="Proteomes" id="UP000006548">
    <property type="component" value="Chromosome 2"/>
</dbReference>
<dbReference type="ExpressionAtlas" id="Q2V452">
    <property type="expression patterns" value="baseline and differential"/>
</dbReference>
<dbReference type="GO" id="GO:0005524">
    <property type="term" value="F:ATP binding"/>
    <property type="evidence" value="ECO:0007669"/>
    <property type="project" value="UniProtKB-KW"/>
</dbReference>
<dbReference type="GO" id="GO:0106310">
    <property type="term" value="F:protein serine kinase activity"/>
    <property type="evidence" value="ECO:0007669"/>
    <property type="project" value="RHEA"/>
</dbReference>
<dbReference type="GO" id="GO:0004674">
    <property type="term" value="F:protein serine/threonine kinase activity"/>
    <property type="evidence" value="ECO:0007669"/>
    <property type="project" value="UniProtKB-KW"/>
</dbReference>
<dbReference type="GO" id="GO:0007165">
    <property type="term" value="P:signal transduction"/>
    <property type="evidence" value="ECO:0007669"/>
    <property type="project" value="InterPro"/>
</dbReference>
<dbReference type="CDD" id="cd12195">
    <property type="entry name" value="CIPK_C"/>
    <property type="match status" value="1"/>
</dbReference>
<dbReference type="CDD" id="cd14663">
    <property type="entry name" value="STKc_SnRK3"/>
    <property type="match status" value="1"/>
</dbReference>
<dbReference type="FunFam" id="1.10.510.10:FF:000279">
    <property type="entry name" value="Non-specific serine/threonine protein kinase"/>
    <property type="match status" value="1"/>
</dbReference>
<dbReference type="FunFam" id="3.30.200.20:FF:000096">
    <property type="entry name" value="Non-specific serine/threonine protein kinase"/>
    <property type="match status" value="1"/>
</dbReference>
<dbReference type="FunFam" id="3.30.310.80:FF:000002">
    <property type="entry name" value="Non-specific serine/threonine protein kinase"/>
    <property type="match status" value="1"/>
</dbReference>
<dbReference type="Gene3D" id="3.30.310.80">
    <property type="entry name" value="Kinase associated domain 1, KA1"/>
    <property type="match status" value="1"/>
</dbReference>
<dbReference type="Gene3D" id="3.30.200.20">
    <property type="entry name" value="Phosphorylase Kinase, domain 1"/>
    <property type="match status" value="1"/>
</dbReference>
<dbReference type="Gene3D" id="1.10.510.10">
    <property type="entry name" value="Transferase(Phosphotransferase) domain 1"/>
    <property type="match status" value="1"/>
</dbReference>
<dbReference type="InterPro" id="IPR011009">
    <property type="entry name" value="Kinase-like_dom_sf"/>
</dbReference>
<dbReference type="InterPro" id="IPR018451">
    <property type="entry name" value="NAF/FISL_domain"/>
</dbReference>
<dbReference type="InterPro" id="IPR004041">
    <property type="entry name" value="NAF_dom"/>
</dbReference>
<dbReference type="InterPro" id="IPR000719">
    <property type="entry name" value="Prot_kinase_dom"/>
</dbReference>
<dbReference type="InterPro" id="IPR017441">
    <property type="entry name" value="Protein_kinase_ATP_BS"/>
</dbReference>
<dbReference type="InterPro" id="IPR008271">
    <property type="entry name" value="Ser/Thr_kinase_AS"/>
</dbReference>
<dbReference type="PANTHER" id="PTHR43895">
    <property type="entry name" value="CALCIUM/CALMODULIN-DEPENDENT PROTEIN KINASE KINASE-RELATED"/>
    <property type="match status" value="1"/>
</dbReference>
<dbReference type="PANTHER" id="PTHR43895:SF104">
    <property type="entry name" value="CBL-INTERACTING SERINE_THREONINE-PROTEIN KINASE 3"/>
    <property type="match status" value="1"/>
</dbReference>
<dbReference type="Pfam" id="PF03822">
    <property type="entry name" value="NAF"/>
    <property type="match status" value="1"/>
</dbReference>
<dbReference type="Pfam" id="PF00069">
    <property type="entry name" value="Pkinase"/>
    <property type="match status" value="1"/>
</dbReference>
<dbReference type="SMART" id="SM00220">
    <property type="entry name" value="S_TKc"/>
    <property type="match status" value="1"/>
</dbReference>
<dbReference type="SUPFAM" id="SSF56112">
    <property type="entry name" value="Protein kinase-like (PK-like)"/>
    <property type="match status" value="1"/>
</dbReference>
<dbReference type="PROSITE" id="PS50816">
    <property type="entry name" value="NAF"/>
    <property type="match status" value="1"/>
</dbReference>
<dbReference type="PROSITE" id="PS00107">
    <property type="entry name" value="PROTEIN_KINASE_ATP"/>
    <property type="match status" value="1"/>
</dbReference>
<dbReference type="PROSITE" id="PS50011">
    <property type="entry name" value="PROTEIN_KINASE_DOM"/>
    <property type="match status" value="1"/>
</dbReference>
<dbReference type="PROSITE" id="PS00108">
    <property type="entry name" value="PROTEIN_KINASE_ST"/>
    <property type="match status" value="1"/>
</dbReference>
<evidence type="ECO:0000250" key="1"/>
<evidence type="ECO:0000255" key="2">
    <source>
        <dbReference type="PROSITE-ProRule" id="PRU00159"/>
    </source>
</evidence>
<evidence type="ECO:0000255" key="3">
    <source>
        <dbReference type="PROSITE-ProRule" id="PRU00256"/>
    </source>
</evidence>
<evidence type="ECO:0000255" key="4">
    <source>
        <dbReference type="PROSITE-ProRule" id="PRU10027"/>
    </source>
</evidence>
<evidence type="ECO:0000269" key="5">
    <source>
    </source>
</evidence>
<evidence type="ECO:0000269" key="6">
    <source>
    </source>
</evidence>
<evidence type="ECO:0000269" key="7">
    <source>
    </source>
</evidence>
<evidence type="ECO:0000303" key="8">
    <source>
    </source>
</evidence>
<evidence type="ECO:0000303" key="9">
    <source>
    </source>
</evidence>
<evidence type="ECO:0000303" key="10">
    <source ref="6"/>
</evidence>
<evidence type="ECO:0000305" key="11"/>
<accession>Q2V452</accession>
<accession>Q0WM53</accession>
<accession>Q2V451</accession>
<accession>Q8RWU8</accession>
<accession>Q93VA4</accession>
<accession>Q9LKC9</accession>
<accession>Q9ZVD9</accession>
<organism>
    <name type="scientific">Arabidopsis thaliana</name>
    <name type="common">Mouse-ear cress</name>
    <dbReference type="NCBI Taxonomy" id="3702"/>
    <lineage>
        <taxon>Eukaryota</taxon>
        <taxon>Viridiplantae</taxon>
        <taxon>Streptophyta</taxon>
        <taxon>Embryophyta</taxon>
        <taxon>Tracheophyta</taxon>
        <taxon>Spermatophyta</taxon>
        <taxon>Magnoliopsida</taxon>
        <taxon>eudicotyledons</taxon>
        <taxon>Gunneridae</taxon>
        <taxon>Pentapetalae</taxon>
        <taxon>rosids</taxon>
        <taxon>malvids</taxon>
        <taxon>Brassicales</taxon>
        <taxon>Brassicaceae</taxon>
        <taxon>Camelineae</taxon>
        <taxon>Arabidopsis</taxon>
    </lineage>
</organism>
<feature type="chain" id="PRO_0000337206" description="CBL-interacting serine/threonine-protein kinase 3">
    <location>
        <begin position="1"/>
        <end position="441"/>
    </location>
</feature>
<feature type="domain" description="Protein kinase" evidence="2">
    <location>
        <begin position="14"/>
        <end position="269"/>
    </location>
</feature>
<feature type="domain" description="NAF" evidence="3">
    <location>
        <begin position="307"/>
        <end position="331"/>
    </location>
</feature>
<feature type="region of interest" description="Activation loop" evidence="1">
    <location>
        <begin position="155"/>
        <end position="184"/>
    </location>
</feature>
<feature type="region of interest" description="PPI" evidence="1">
    <location>
        <begin position="337"/>
        <end position="366"/>
    </location>
</feature>
<feature type="active site" description="Proton acceptor" evidence="2 4">
    <location>
        <position position="137"/>
    </location>
</feature>
<feature type="binding site" evidence="2">
    <location>
        <begin position="20"/>
        <end position="28"/>
    </location>
    <ligand>
        <name>ATP</name>
        <dbReference type="ChEBI" id="CHEBI:30616"/>
    </ligand>
</feature>
<feature type="binding site" evidence="2">
    <location>
        <position position="43"/>
    </location>
    <ligand>
        <name>ATP</name>
        <dbReference type="ChEBI" id="CHEBI:30616"/>
    </ligand>
</feature>
<feature type="splice variant" id="VSP_038051" description="In isoform 1." evidence="10">
    <original>M</original>
    <variation>MLIPNKKLRE</variation>
    <location>
        <position position="1"/>
    </location>
</feature>
<feature type="splice variant" id="VSP_033979" description="In isoform 3." evidence="9">
    <original>MRLENVKAGR</original>
    <variation>VSENSVTEMK</variation>
    <location>
        <begin position="373"/>
        <end position="382"/>
    </location>
</feature>
<feature type="splice variant" id="VSP_033980" description="In isoform 5." evidence="8">
    <original>MRL</original>
    <variation>YIT</variation>
    <location>
        <begin position="373"/>
        <end position="375"/>
    </location>
</feature>
<feature type="splice variant" id="VSP_038049" description="In isoform 5." evidence="8">
    <location>
        <begin position="376"/>
        <end position="441"/>
    </location>
</feature>
<feature type="splice variant" id="VSP_038050" description="In isoform 3." evidence="9">
    <location>
        <begin position="383"/>
        <end position="441"/>
    </location>
</feature>
<feature type="splice variant" id="VSP_033981" description="In isoform 4." evidence="11">
    <original>IFQVAPSLHMVQVSKSKGDTLEFHKFYKKLSNSLEQVVWTNNEVKKETAK</original>
    <variation>VCYMRLDIQESVGDGLLNQCVFCLYGVTTSRYS</variation>
    <location>
        <begin position="392"/>
        <end position="441"/>
    </location>
</feature>
<name>CIPK3_ARATH</name>
<proteinExistence type="evidence at protein level"/>
<reference key="1">
    <citation type="journal article" date="2000" name="Plant Physiol.">
        <title>Interaction specificity of Arabidopsis calcineurin B-like calcium sensors and their target kinases.</title>
        <authorList>
            <person name="Kim K.-N."/>
            <person name="Cheong Y.H."/>
            <person name="Gupta R."/>
            <person name="Luan S."/>
        </authorList>
    </citation>
    <scope>NUCLEOTIDE SEQUENCE [MRNA] (ISOFORM 5)</scope>
    <scope>INTERACTION WITH CBL3</scope>
    <source>
        <strain>cv. Columbia</strain>
    </source>
</reference>
<reference key="2">
    <citation type="submission" date="2003-04" db="EMBL/GenBank/DDBJ databases">
        <authorList>
            <person name="Albrecht V."/>
            <person name="Weinl S."/>
            <person name="Kudla J."/>
        </authorList>
    </citation>
    <scope>NUCLEOTIDE SEQUENCE [MRNA] (ISOFORM 2)</scope>
</reference>
<reference key="3">
    <citation type="journal article" date="1999" name="Nature">
        <title>Sequence and analysis of chromosome 2 of the plant Arabidopsis thaliana.</title>
        <authorList>
            <person name="Lin X."/>
            <person name="Kaul S."/>
            <person name="Rounsley S.D."/>
            <person name="Shea T.P."/>
            <person name="Benito M.-I."/>
            <person name="Town C.D."/>
            <person name="Fujii C.Y."/>
            <person name="Mason T.M."/>
            <person name="Bowman C.L."/>
            <person name="Barnstead M.E."/>
            <person name="Feldblyum T.V."/>
            <person name="Buell C.R."/>
            <person name="Ketchum K.A."/>
            <person name="Lee J.J."/>
            <person name="Ronning C.M."/>
            <person name="Koo H.L."/>
            <person name="Moffat K.S."/>
            <person name="Cronin L.A."/>
            <person name="Shen M."/>
            <person name="Pai G."/>
            <person name="Van Aken S."/>
            <person name="Umayam L."/>
            <person name="Tallon L.J."/>
            <person name="Gill J.E."/>
            <person name="Adams M.D."/>
            <person name="Carrera A.J."/>
            <person name="Creasy T.H."/>
            <person name="Goodman H.M."/>
            <person name="Somerville C.R."/>
            <person name="Copenhaver G.P."/>
            <person name="Preuss D."/>
            <person name="Nierman W.C."/>
            <person name="White O."/>
            <person name="Eisen J.A."/>
            <person name="Salzberg S.L."/>
            <person name="Fraser C.M."/>
            <person name="Venter J.C."/>
        </authorList>
    </citation>
    <scope>NUCLEOTIDE SEQUENCE [LARGE SCALE GENOMIC DNA]</scope>
    <source>
        <strain>cv. Columbia</strain>
    </source>
</reference>
<reference key="4">
    <citation type="journal article" date="2017" name="Plant J.">
        <title>Araport11: a complete reannotation of the Arabidopsis thaliana reference genome.</title>
        <authorList>
            <person name="Cheng C.Y."/>
            <person name="Krishnakumar V."/>
            <person name="Chan A.P."/>
            <person name="Thibaud-Nissen F."/>
            <person name="Schobel S."/>
            <person name="Town C.D."/>
        </authorList>
    </citation>
    <scope>GENOME REANNOTATION</scope>
    <source>
        <strain>cv. Columbia</strain>
    </source>
</reference>
<reference key="5">
    <citation type="journal article" date="2003" name="Science">
        <title>Empirical analysis of transcriptional activity in the Arabidopsis genome.</title>
        <authorList>
            <person name="Yamada K."/>
            <person name="Lim J."/>
            <person name="Dale J.M."/>
            <person name="Chen H."/>
            <person name="Shinn P."/>
            <person name="Palm C.J."/>
            <person name="Southwick A.M."/>
            <person name="Wu H.C."/>
            <person name="Kim C.J."/>
            <person name="Nguyen M."/>
            <person name="Pham P.K."/>
            <person name="Cheuk R.F."/>
            <person name="Karlin-Newmann G."/>
            <person name="Liu S.X."/>
            <person name="Lam B."/>
            <person name="Sakano H."/>
            <person name="Wu T."/>
            <person name="Yu G."/>
            <person name="Miranda M."/>
            <person name="Quach H.L."/>
            <person name="Tripp M."/>
            <person name="Chang C.H."/>
            <person name="Lee J.M."/>
            <person name="Toriumi M.J."/>
            <person name="Chan M.M."/>
            <person name="Tang C.C."/>
            <person name="Onodera C.S."/>
            <person name="Deng J.M."/>
            <person name="Akiyama K."/>
            <person name="Ansari Y."/>
            <person name="Arakawa T."/>
            <person name="Banh J."/>
            <person name="Banno F."/>
            <person name="Bowser L."/>
            <person name="Brooks S.Y."/>
            <person name="Carninci P."/>
            <person name="Chao Q."/>
            <person name="Choy N."/>
            <person name="Enju A."/>
            <person name="Goldsmith A.D."/>
            <person name="Gurjal M."/>
            <person name="Hansen N.F."/>
            <person name="Hayashizaki Y."/>
            <person name="Johnson-Hopson C."/>
            <person name="Hsuan V.W."/>
            <person name="Iida K."/>
            <person name="Karnes M."/>
            <person name="Khan S."/>
            <person name="Koesema E."/>
            <person name="Ishida J."/>
            <person name="Jiang P.X."/>
            <person name="Jones T."/>
            <person name="Kawai J."/>
            <person name="Kamiya A."/>
            <person name="Meyers C."/>
            <person name="Nakajima M."/>
            <person name="Narusaka M."/>
            <person name="Seki M."/>
            <person name="Sakurai T."/>
            <person name="Satou M."/>
            <person name="Tamse R."/>
            <person name="Vaysberg M."/>
            <person name="Wallender E.K."/>
            <person name="Wong C."/>
            <person name="Yamamura Y."/>
            <person name="Yuan S."/>
            <person name="Shinozaki K."/>
            <person name="Davis R.W."/>
            <person name="Theologis A."/>
            <person name="Ecker J.R."/>
        </authorList>
    </citation>
    <scope>NUCLEOTIDE SEQUENCE [LARGE SCALE MRNA] (ISOFORMS 2 AND 3)</scope>
    <source>
        <strain>cv. Columbia</strain>
    </source>
</reference>
<reference key="6">
    <citation type="submission" date="2006-07" db="EMBL/GenBank/DDBJ databases">
        <title>Large-scale analysis of RIKEN Arabidopsis full-length (RAFL) cDNAs.</title>
        <authorList>
            <person name="Totoki Y."/>
            <person name="Seki M."/>
            <person name="Ishida J."/>
            <person name="Nakajima M."/>
            <person name="Enju A."/>
            <person name="Kamiya A."/>
            <person name="Narusaka M."/>
            <person name="Shin-i T."/>
            <person name="Nakagawa M."/>
            <person name="Sakamoto N."/>
            <person name="Oishi K."/>
            <person name="Kohara Y."/>
            <person name="Kobayashi M."/>
            <person name="Toyoda A."/>
            <person name="Sakaki Y."/>
            <person name="Sakurai T."/>
            <person name="Iida K."/>
            <person name="Akiyama K."/>
            <person name="Satou M."/>
            <person name="Toyoda T."/>
            <person name="Konagaya A."/>
            <person name="Carninci P."/>
            <person name="Kawai J."/>
            <person name="Hayashizaki Y."/>
            <person name="Shinozaki K."/>
        </authorList>
    </citation>
    <scope>NUCLEOTIDE SEQUENCE [LARGE SCALE MRNA] OF 170-441 (ISOFORMS 1 AND 2)</scope>
    <source>
        <strain>cv. Columbia</strain>
    </source>
</reference>
<reference key="7">
    <citation type="journal article" date="2003" name="Plant Cell">
        <title>CIPK3, a calcium sensor-associated protein kinase that regulates abscisic acid and cold signal transduction in Arabidopsis.</title>
        <authorList>
            <person name="Kim K.-N."/>
            <person name="Cheong Y.H."/>
            <person name="Grant J.J."/>
            <person name="Pandey G.K."/>
            <person name="Luan S."/>
        </authorList>
    </citation>
    <scope>FUNCTION</scope>
    <scope>INDUCTION</scope>
    <scope>TISSUE SPECIFICITY</scope>
</reference>
<reference key="8">
    <citation type="journal article" date="2003" name="Plant Physiol.">
        <title>The Arabidopsis CDPK-SnRK superfamily of protein kinases.</title>
        <authorList>
            <person name="Hrabak E.M."/>
            <person name="Chan C.W.M."/>
            <person name="Gribskov M."/>
            <person name="Harper J.F."/>
            <person name="Choi J.H."/>
            <person name="Halford N."/>
            <person name="Kudla J."/>
            <person name="Luan S."/>
            <person name="Nimmo H.G."/>
            <person name="Sussman M.R."/>
            <person name="Thomas M."/>
            <person name="Walker-Simmons K."/>
            <person name="Zhu J.-K."/>
            <person name="Harmon A.C."/>
        </authorList>
    </citation>
    <scope>GENE FAMILY</scope>
    <scope>NOMENCLATURE</scope>
</reference>
<reference key="9">
    <citation type="journal article" date="2008" name="Mol. Plant">
        <title>Calcineurin-B-like protein CBL9 interacts with target kinase CIPK3 in the regulation of ABA response in seed germination.</title>
        <authorList>
            <person name="Pandey G.K."/>
            <person name="Grant J.J."/>
            <person name="Cheong Y.H."/>
            <person name="Kim B.G."/>
            <person name="Li L."/>
            <person name="Luan S."/>
        </authorList>
    </citation>
    <scope>FUNCTION</scope>
    <scope>INTERACTION WITH CBL9</scope>
</reference>